<dbReference type="EC" id="2.7.7.13" evidence="1 14"/>
<dbReference type="EMBL" id="AF076484">
    <property type="protein sequence ID" value="AAC78474.1"/>
    <property type="molecule type" value="mRNA"/>
</dbReference>
<dbReference type="EMBL" id="AF108660">
    <property type="protein sequence ID" value="AAD04627.1"/>
    <property type="molecule type" value="mRNA"/>
</dbReference>
<dbReference type="EMBL" id="AJ275979">
    <property type="protein sequence ID" value="CAC35355.1"/>
    <property type="molecule type" value="Genomic_DNA"/>
</dbReference>
<dbReference type="EMBL" id="AC003000">
    <property type="protein sequence ID" value="AAB87126.1"/>
    <property type="molecule type" value="Genomic_DNA"/>
</dbReference>
<dbReference type="EMBL" id="CP002685">
    <property type="protein sequence ID" value="AEC09721.1"/>
    <property type="molecule type" value="Genomic_DNA"/>
</dbReference>
<dbReference type="EMBL" id="CP002685">
    <property type="protein sequence ID" value="AEC09722.1"/>
    <property type="molecule type" value="Genomic_DNA"/>
</dbReference>
<dbReference type="EMBL" id="CP002685">
    <property type="protein sequence ID" value="ANM63165.1"/>
    <property type="molecule type" value="Genomic_DNA"/>
</dbReference>
<dbReference type="EMBL" id="AF361812">
    <property type="protein sequence ID" value="AAK32825.1"/>
    <property type="molecule type" value="mRNA"/>
</dbReference>
<dbReference type="EMBL" id="AY057541">
    <property type="protein sequence ID" value="AAL09781.1"/>
    <property type="molecule type" value="mRNA"/>
</dbReference>
<dbReference type="EMBL" id="AF428297">
    <property type="protein sequence ID" value="AAL16129.1"/>
    <property type="molecule type" value="mRNA"/>
</dbReference>
<dbReference type="EMBL" id="AY133643">
    <property type="protein sequence ID" value="AAM91473.1"/>
    <property type="molecule type" value="mRNA"/>
</dbReference>
<dbReference type="EMBL" id="BT000697">
    <property type="protein sequence ID" value="AAN31841.1"/>
    <property type="molecule type" value="mRNA"/>
</dbReference>
<dbReference type="EMBL" id="BT006365">
    <property type="protein sequence ID" value="AAP21173.1"/>
    <property type="molecule type" value="mRNA"/>
</dbReference>
<dbReference type="EMBL" id="AY087698">
    <property type="protein sequence ID" value="AAM65235.1"/>
    <property type="molecule type" value="mRNA"/>
</dbReference>
<dbReference type="PIR" id="T01007">
    <property type="entry name" value="T01007"/>
</dbReference>
<dbReference type="RefSeq" id="NP_001189713.1">
    <property type="nucleotide sequence ID" value="NM_001202784.1"/>
</dbReference>
<dbReference type="RefSeq" id="NP_001325272.1">
    <property type="nucleotide sequence ID" value="NM_001336797.1"/>
</dbReference>
<dbReference type="RefSeq" id="NP_181507.1">
    <property type="nucleotide sequence ID" value="NM_129535.4"/>
</dbReference>
<dbReference type="PDB" id="7X8J">
    <property type="method" value="X-ray"/>
    <property type="resolution" value="2.80 A"/>
    <property type="chains" value="A/B=1-361"/>
</dbReference>
<dbReference type="PDB" id="7X8K">
    <property type="method" value="X-ray"/>
    <property type="resolution" value="3.00 A"/>
    <property type="chains" value="A/B/C/D=1-361"/>
</dbReference>
<dbReference type="PDBsum" id="7X8J"/>
<dbReference type="PDBsum" id="7X8K"/>
<dbReference type="SMR" id="O22287"/>
<dbReference type="BioGRID" id="3900">
    <property type="interactions" value="5"/>
</dbReference>
<dbReference type="FunCoup" id="O22287">
    <property type="interactions" value="3356"/>
</dbReference>
<dbReference type="IntAct" id="O22287">
    <property type="interactions" value="2"/>
</dbReference>
<dbReference type="STRING" id="3702.O22287"/>
<dbReference type="MetOSite" id="O22287"/>
<dbReference type="PaxDb" id="3702-AT2G39770.1"/>
<dbReference type="ProteomicsDB" id="247005"/>
<dbReference type="EnsemblPlants" id="AT2G39770.1">
    <property type="protein sequence ID" value="AT2G39770.1"/>
    <property type="gene ID" value="AT2G39770"/>
</dbReference>
<dbReference type="EnsemblPlants" id="AT2G39770.2">
    <property type="protein sequence ID" value="AT2G39770.2"/>
    <property type="gene ID" value="AT2G39770"/>
</dbReference>
<dbReference type="EnsemblPlants" id="AT2G39770.3">
    <property type="protein sequence ID" value="AT2G39770.3"/>
    <property type="gene ID" value="AT2G39770"/>
</dbReference>
<dbReference type="GeneID" id="818562"/>
<dbReference type="Gramene" id="AT2G39770.1">
    <property type="protein sequence ID" value="AT2G39770.1"/>
    <property type="gene ID" value="AT2G39770"/>
</dbReference>
<dbReference type="Gramene" id="AT2G39770.2">
    <property type="protein sequence ID" value="AT2G39770.2"/>
    <property type="gene ID" value="AT2G39770"/>
</dbReference>
<dbReference type="Gramene" id="AT2G39770.3">
    <property type="protein sequence ID" value="AT2G39770.3"/>
    <property type="gene ID" value="AT2G39770"/>
</dbReference>
<dbReference type="KEGG" id="ath:AT2G39770"/>
<dbReference type="Araport" id="AT2G39770"/>
<dbReference type="TAIR" id="AT2G39770">
    <property type="gene designation" value="CYT1"/>
</dbReference>
<dbReference type="eggNOG" id="KOG1322">
    <property type="taxonomic scope" value="Eukaryota"/>
</dbReference>
<dbReference type="HOGENOM" id="CLU_029499_0_0_1"/>
<dbReference type="InParanoid" id="O22287"/>
<dbReference type="OMA" id="GPNCWIC"/>
<dbReference type="OrthoDB" id="1733332at2759"/>
<dbReference type="PhylomeDB" id="O22287"/>
<dbReference type="BioCyc" id="MetaCyc:AT2G39770-MONOMER"/>
<dbReference type="BRENDA" id="2.7.7.13">
    <property type="organism ID" value="399"/>
</dbReference>
<dbReference type="UniPathway" id="UPA00126">
    <property type="reaction ID" value="UER00930"/>
</dbReference>
<dbReference type="CD-CODE" id="4299E36E">
    <property type="entry name" value="Nucleolus"/>
</dbReference>
<dbReference type="PRO" id="PR:O22287"/>
<dbReference type="Proteomes" id="UP000006548">
    <property type="component" value="Chromosome 2"/>
</dbReference>
<dbReference type="ExpressionAtlas" id="O22287">
    <property type="expression patterns" value="baseline and differential"/>
</dbReference>
<dbReference type="GO" id="GO:0005829">
    <property type="term" value="C:cytosol"/>
    <property type="evidence" value="ECO:0000314"/>
    <property type="project" value="TAIR"/>
</dbReference>
<dbReference type="GO" id="GO:0005634">
    <property type="term" value="C:nucleus"/>
    <property type="evidence" value="ECO:0000314"/>
    <property type="project" value="TAIR"/>
</dbReference>
<dbReference type="GO" id="GO:0005525">
    <property type="term" value="F:GTP binding"/>
    <property type="evidence" value="ECO:0007669"/>
    <property type="project" value="UniProtKB-KW"/>
</dbReference>
<dbReference type="GO" id="GO:0004475">
    <property type="term" value="F:mannose-1-phosphate guanylyltransferase (GTP) activity"/>
    <property type="evidence" value="ECO:0000315"/>
    <property type="project" value="TAIR"/>
</dbReference>
<dbReference type="GO" id="GO:0030244">
    <property type="term" value="P:cellulose biosynthetic process"/>
    <property type="evidence" value="ECO:0000315"/>
    <property type="project" value="TAIR"/>
</dbReference>
<dbReference type="GO" id="GO:0042742">
    <property type="term" value="P:defense response to bacterium"/>
    <property type="evidence" value="ECO:0000315"/>
    <property type="project" value="TAIR"/>
</dbReference>
<dbReference type="GO" id="GO:0009298">
    <property type="term" value="P:GDP-mannose biosynthetic process"/>
    <property type="evidence" value="ECO:0007669"/>
    <property type="project" value="UniProtKB-UniPathway"/>
</dbReference>
<dbReference type="GO" id="GO:0019853">
    <property type="term" value="P:L-ascorbic acid biosynthetic process"/>
    <property type="evidence" value="ECO:0000315"/>
    <property type="project" value="TAIR"/>
</dbReference>
<dbReference type="GO" id="GO:0060359">
    <property type="term" value="P:response to ammonium ion"/>
    <property type="evidence" value="ECO:0000315"/>
    <property type="project" value="TAIR"/>
</dbReference>
<dbReference type="GO" id="GO:0009408">
    <property type="term" value="P:response to heat"/>
    <property type="evidence" value="ECO:0000315"/>
    <property type="project" value="TAIR"/>
</dbReference>
<dbReference type="GO" id="GO:0009753">
    <property type="term" value="P:response to jasmonic acid"/>
    <property type="evidence" value="ECO:0000270"/>
    <property type="project" value="TAIR"/>
</dbReference>
<dbReference type="GO" id="GO:0010193">
    <property type="term" value="P:response to ozone"/>
    <property type="evidence" value="ECO:0000270"/>
    <property type="project" value="TAIR"/>
</dbReference>
<dbReference type="GO" id="GO:0009651">
    <property type="term" value="P:response to salt stress"/>
    <property type="evidence" value="ECO:0000315"/>
    <property type="project" value="TAIR"/>
</dbReference>
<dbReference type="CDD" id="cd06425">
    <property type="entry name" value="M1P_guanylylT_B_like_N"/>
    <property type="match status" value="1"/>
</dbReference>
<dbReference type="FunFam" id="3.90.550.10:FF:000013">
    <property type="entry name" value="mannose-1-phosphate guanyltransferase beta"/>
    <property type="match status" value="1"/>
</dbReference>
<dbReference type="FunFam" id="2.160.10.10:FF:000038">
    <property type="entry name" value="mRNA, clone: RTFL01-10-C12"/>
    <property type="match status" value="1"/>
</dbReference>
<dbReference type="Gene3D" id="2.160.10.10">
    <property type="entry name" value="Hexapeptide repeat proteins"/>
    <property type="match status" value="1"/>
</dbReference>
<dbReference type="Gene3D" id="3.90.550.10">
    <property type="entry name" value="Spore Coat Polysaccharide Biosynthesis Protein SpsA, Chain A"/>
    <property type="match status" value="1"/>
</dbReference>
<dbReference type="InterPro" id="IPR056729">
    <property type="entry name" value="GMPPB_C"/>
</dbReference>
<dbReference type="InterPro" id="IPR045233">
    <property type="entry name" value="GMPPB_N"/>
</dbReference>
<dbReference type="InterPro" id="IPR050486">
    <property type="entry name" value="Mannose-1P_guanyltransferase"/>
</dbReference>
<dbReference type="InterPro" id="IPR005835">
    <property type="entry name" value="NTP_transferase_dom"/>
</dbReference>
<dbReference type="InterPro" id="IPR029044">
    <property type="entry name" value="Nucleotide-diphossugar_trans"/>
</dbReference>
<dbReference type="PANTHER" id="PTHR22572">
    <property type="entry name" value="SUGAR-1-PHOSPHATE GUANYL TRANSFERASE"/>
    <property type="match status" value="1"/>
</dbReference>
<dbReference type="Pfam" id="PF25087">
    <property type="entry name" value="GMPPB_C"/>
    <property type="match status" value="1"/>
</dbReference>
<dbReference type="Pfam" id="PF00483">
    <property type="entry name" value="NTP_transferase"/>
    <property type="match status" value="1"/>
</dbReference>
<dbReference type="SUPFAM" id="SSF53448">
    <property type="entry name" value="Nucleotide-diphospho-sugar transferases"/>
    <property type="match status" value="1"/>
</dbReference>
<dbReference type="PROSITE" id="PS00101">
    <property type="entry name" value="HEXAPEP_TRANSFERASES"/>
    <property type="match status" value="1"/>
</dbReference>
<protein>
    <recommendedName>
        <fullName evidence="35">Mannose-1-phosphate guanylyltransferase 1</fullName>
        <ecNumber evidence="1 14">2.7.7.13</ecNumber>
    </recommendedName>
    <alternativeName>
        <fullName evidence="31 33">GDP-mannose pyrophosphorylase 1</fullName>
    </alternativeName>
    <alternativeName>
        <fullName evidence="20 30 32">Protein CYTOKINESIS DEFECTIVE 1</fullName>
    </alternativeName>
    <alternativeName>
        <fullName evidence="23">Protein EMBRYO DEFECTIVE 101</fullName>
    </alternativeName>
    <alternativeName>
        <fullName evidence="27">Protein HYPERSENSITIVE TO AMMONIUM ION 1</fullName>
    </alternativeName>
    <alternativeName>
        <fullName evidence="28">Protein SENSITIVE TO OZONE 1</fullName>
    </alternativeName>
    <alternativeName>
        <fullName evidence="18 19 29">Protein VITAMIN C DEFECTIVE 1</fullName>
    </alternativeName>
</protein>
<accession>O22287</accession>
<accession>Q9C5B8</accession>
<reference key="1">
    <citation type="online journal article" date="1998" name="Plant Gene Register">
        <title>Characterization of the cDNA and gene for the Arabidopsis thaliana GDP-mannose pyrophosphorylase.</title>
        <authorList>
            <person name="Weers B."/>
            <person name="Thornburg R."/>
        </authorList>
        <locator>PGR98-175</locator>
    </citation>
    <scope>NUCLEOTIDE SEQUENCE [MRNA]</scope>
    <source>
        <strain>cv. Columbia</strain>
    </source>
</reference>
<reference key="2">
    <citation type="submission" date="1998-11" db="EMBL/GenBank/DDBJ databases">
        <title>Positional cloning of the Arabidopsis cyt1 gene.</title>
        <authorList>
            <person name="Lukowitz W."/>
            <person name="Somerville C."/>
        </authorList>
    </citation>
    <scope>NUCLEOTIDE SEQUENCE [MRNA]</scope>
    <source>
        <strain>cv. Columbia</strain>
    </source>
</reference>
<reference key="3">
    <citation type="submission" date="2000-03" db="EMBL/GenBank/DDBJ databases">
        <title>Genes responding to phosphate starvation placed together in Arabidopsis genome.</title>
        <authorList>
            <person name="Avila C."/>
        </authorList>
    </citation>
    <scope>NUCLEOTIDE SEQUENCE [GENOMIC DNA]</scope>
</reference>
<reference key="4">
    <citation type="journal article" date="1999" name="Nature">
        <title>Sequence and analysis of chromosome 2 of the plant Arabidopsis thaliana.</title>
        <authorList>
            <person name="Lin X."/>
            <person name="Kaul S."/>
            <person name="Rounsley S.D."/>
            <person name="Shea T.P."/>
            <person name="Benito M.-I."/>
            <person name="Town C.D."/>
            <person name="Fujii C.Y."/>
            <person name="Mason T.M."/>
            <person name="Bowman C.L."/>
            <person name="Barnstead M.E."/>
            <person name="Feldblyum T.V."/>
            <person name="Buell C.R."/>
            <person name="Ketchum K.A."/>
            <person name="Lee J.J."/>
            <person name="Ronning C.M."/>
            <person name="Koo H.L."/>
            <person name="Moffat K.S."/>
            <person name="Cronin L.A."/>
            <person name="Shen M."/>
            <person name="Pai G."/>
            <person name="Van Aken S."/>
            <person name="Umayam L."/>
            <person name="Tallon L.J."/>
            <person name="Gill J.E."/>
            <person name="Adams M.D."/>
            <person name="Carrera A.J."/>
            <person name="Creasy T.H."/>
            <person name="Goodman H.M."/>
            <person name="Somerville C.R."/>
            <person name="Copenhaver G.P."/>
            <person name="Preuss D."/>
            <person name="Nierman W.C."/>
            <person name="White O."/>
            <person name="Eisen J.A."/>
            <person name="Salzberg S.L."/>
            <person name="Fraser C.M."/>
            <person name="Venter J.C."/>
        </authorList>
    </citation>
    <scope>NUCLEOTIDE SEQUENCE [LARGE SCALE GENOMIC DNA]</scope>
    <source>
        <strain>cv. Columbia</strain>
    </source>
</reference>
<reference key="5">
    <citation type="journal article" date="2017" name="Plant J.">
        <title>Araport11: a complete reannotation of the Arabidopsis thaliana reference genome.</title>
        <authorList>
            <person name="Cheng C.Y."/>
            <person name="Krishnakumar V."/>
            <person name="Chan A.P."/>
            <person name="Thibaud-Nissen F."/>
            <person name="Schobel S."/>
            <person name="Town C.D."/>
        </authorList>
    </citation>
    <scope>GENOME REANNOTATION</scope>
    <source>
        <strain>cv. Columbia</strain>
    </source>
</reference>
<reference key="6">
    <citation type="journal article" date="2003" name="Science">
        <title>Empirical analysis of transcriptional activity in the Arabidopsis genome.</title>
        <authorList>
            <person name="Yamada K."/>
            <person name="Lim J."/>
            <person name="Dale J.M."/>
            <person name="Chen H."/>
            <person name="Shinn P."/>
            <person name="Palm C.J."/>
            <person name="Southwick A.M."/>
            <person name="Wu H.C."/>
            <person name="Kim C.J."/>
            <person name="Nguyen M."/>
            <person name="Pham P.K."/>
            <person name="Cheuk R.F."/>
            <person name="Karlin-Newmann G."/>
            <person name="Liu S.X."/>
            <person name="Lam B."/>
            <person name="Sakano H."/>
            <person name="Wu T."/>
            <person name="Yu G."/>
            <person name="Miranda M."/>
            <person name="Quach H.L."/>
            <person name="Tripp M."/>
            <person name="Chang C.H."/>
            <person name="Lee J.M."/>
            <person name="Toriumi M.J."/>
            <person name="Chan M.M."/>
            <person name="Tang C.C."/>
            <person name="Onodera C.S."/>
            <person name="Deng J.M."/>
            <person name="Akiyama K."/>
            <person name="Ansari Y."/>
            <person name="Arakawa T."/>
            <person name="Banh J."/>
            <person name="Banno F."/>
            <person name="Bowser L."/>
            <person name="Brooks S.Y."/>
            <person name="Carninci P."/>
            <person name="Chao Q."/>
            <person name="Choy N."/>
            <person name="Enju A."/>
            <person name="Goldsmith A.D."/>
            <person name="Gurjal M."/>
            <person name="Hansen N.F."/>
            <person name="Hayashizaki Y."/>
            <person name="Johnson-Hopson C."/>
            <person name="Hsuan V.W."/>
            <person name="Iida K."/>
            <person name="Karnes M."/>
            <person name="Khan S."/>
            <person name="Koesema E."/>
            <person name="Ishida J."/>
            <person name="Jiang P.X."/>
            <person name="Jones T."/>
            <person name="Kawai J."/>
            <person name="Kamiya A."/>
            <person name="Meyers C."/>
            <person name="Nakajima M."/>
            <person name="Narusaka M."/>
            <person name="Seki M."/>
            <person name="Sakurai T."/>
            <person name="Satou M."/>
            <person name="Tamse R."/>
            <person name="Vaysberg M."/>
            <person name="Wallender E.K."/>
            <person name="Wong C."/>
            <person name="Yamamura Y."/>
            <person name="Yuan S."/>
            <person name="Shinozaki K."/>
            <person name="Davis R.W."/>
            <person name="Theologis A."/>
            <person name="Ecker J.R."/>
        </authorList>
    </citation>
    <scope>NUCLEOTIDE SEQUENCE [LARGE SCALE MRNA]</scope>
    <source>
        <strain>cv. Columbia</strain>
    </source>
</reference>
<reference key="7">
    <citation type="submission" date="2002-03" db="EMBL/GenBank/DDBJ databases">
        <title>Full-length cDNA from Arabidopsis thaliana.</title>
        <authorList>
            <person name="Brover V.V."/>
            <person name="Troukhan M.E."/>
            <person name="Alexandrov N.A."/>
            <person name="Lu Y.-P."/>
            <person name="Flavell R.B."/>
            <person name="Feldmann K.A."/>
        </authorList>
    </citation>
    <scope>NUCLEOTIDE SEQUENCE [LARGE SCALE MRNA]</scope>
</reference>
<reference key="8">
    <citation type="journal article" date="1996" name="Proc. Natl. Acad. Sci. U.S.A.">
        <title>Environmental stress sensitivity of an ascorbic acid-deficient Arabidopsis mutant.</title>
        <authorList>
            <person name="Conklin P.L."/>
            <person name="Williams E.H."/>
            <person name="Last R.L."/>
        </authorList>
    </citation>
    <scope>FUNCTION</scope>
    <scope>DISRUPTION PHENOTYPE</scope>
</reference>
<reference key="9">
    <citation type="journal article" date="1997" name="Plant Physiol.">
        <title>L-ascorbic acid metabolism in the ascorbate-deficient arabidopsis mutant vtc1.</title>
        <authorList>
            <person name="Conklin P.L."/>
            <person name="Pallanca J.E."/>
            <person name="Last R.L."/>
            <person name="Smirnoff N."/>
        </authorList>
    </citation>
    <scope>FUNCTION</scope>
    <scope>DISRUPTION PHENOTYPE</scope>
</reference>
<reference key="10">
    <citation type="journal article" date="1998" name="Plant J.">
        <title>A cytokinesis-defective mutant of Arabidopsis (cyt1) characterized by embryonic lethality, incomplete cell walls, and excessive callose accumulation.</title>
        <authorList>
            <person name="Nickle T.C."/>
            <person name="Meinke D.W."/>
        </authorList>
    </citation>
    <scope>DISRUPTION PHENOTYPE</scope>
    <source>
        <strain>cv. Wassilewskija</strain>
    </source>
</reference>
<reference key="11">
    <citation type="journal article" date="1999" name="Proc. Natl. Acad. Sci. U.S.A.">
        <title>Genetic evidence for the role of GDP-mannose in plant ascorbic acid (vitamin C) biosynthesis.</title>
        <authorList>
            <person name="Conklin P.L."/>
            <person name="Norris S.R."/>
            <person name="Wheeler G.L."/>
            <person name="Williams E.H."/>
            <person name="Smirnoff N."/>
            <person name="Last R.L."/>
        </authorList>
    </citation>
    <scope>FUNCTION</scope>
    <scope>DISRUPTION PHENOTYPE</scope>
    <scope>MUTAGENESIS OF PRO-22</scope>
    <scope>CATALYTIC ACTIVITY</scope>
    <scope>PATHWAY</scope>
    <source>
        <strain>cv. Columbia</strain>
    </source>
</reference>
<reference key="12">
    <citation type="journal article" date="2000" name="Genetics">
        <title>Identification of ascorbic acid-deficient Arabidopsis thaliana mutants.</title>
        <authorList>
            <person name="Conklin P.L."/>
            <person name="Saracco S.A."/>
            <person name="Norris S.R."/>
            <person name="Last R.L."/>
        </authorList>
    </citation>
    <scope>FUNCTION</scope>
    <scope>DISRUPTION PHENOTYPE</scope>
    <source>
        <strain>cv. Columbia</strain>
    </source>
</reference>
<reference key="13">
    <citation type="journal article" date="2001" name="Proc. Natl. Acad. Sci. U.S.A.">
        <title>Arabidopsis cyt1 mutants are deficient in a mannose-1-phosphate guanylyltransferase and point to a requirement of N-linked glycosylation for cellulose biosynthesis.</title>
        <authorList>
            <person name="Lukowitz W."/>
            <person name="Nickle T.C."/>
            <person name="Meinke D.W."/>
            <person name="Last R.L."/>
            <person name="Conklin P.L."/>
            <person name="Somerville C.R."/>
        </authorList>
    </citation>
    <scope>FUNCTION</scope>
    <scope>MUTAGENESIS OF PRO-89</scope>
</reference>
<reference key="14">
    <citation type="journal article" date="2003" name="Plant Cell">
        <title>Leaf vitamin C contents modulate plant defense transcripts and regulate genes that control development through hormone signaling.</title>
        <authorList>
            <person name="Pastori G.M."/>
            <person name="Kiddle G."/>
            <person name="Antoniw J."/>
            <person name="Bernard S."/>
            <person name="Veljovic-Jovanovic S."/>
            <person name="Verrier P.J."/>
            <person name="Noctor G."/>
            <person name="Foyer C.H."/>
        </authorList>
    </citation>
    <scope>FUNCTION</scope>
    <scope>DISRUPTION PHENOTYPE</scope>
</reference>
<reference key="15">
    <citation type="journal article" date="2004" name="Plant Physiol.">
        <title>The timing of senescence and response to pathogens is altered in the ascorbate-deficient Arabidopsis mutant vitamin c-1.</title>
        <authorList>
            <person name="Barth C."/>
            <person name="Moeder W."/>
            <person name="Klessig D.F."/>
            <person name="Conklin P.L."/>
        </authorList>
    </citation>
    <scope>FUNCTION</scope>
    <scope>DISRUPTION PHENOTYPE</scope>
</reference>
<reference key="16">
    <citation type="journal article" date="2004" name="Plant Physiol.">
        <title>Identification of genes required for embryo development in Arabidopsis.</title>
        <authorList>
            <person name="Tzafrir I."/>
            <person name="Pena-Muralla R."/>
            <person name="Dickerman A."/>
            <person name="Berg M."/>
            <person name="Rogers R."/>
            <person name="Hutchens S."/>
            <person name="Sweeney T.C."/>
            <person name="McElver J."/>
            <person name="Aux G."/>
            <person name="Patton D."/>
            <person name="Meinke D."/>
        </authorList>
    </citation>
    <scope>FUNCTION</scope>
    <scope>DISRUPTION PHENOTYPE</scope>
    <source>
        <strain>cv. Wassilewskija</strain>
    </source>
</reference>
<reference key="17">
    <citation type="journal article" date="2005" name="Plant Physiol.">
        <title>Ascorbic acid deficiency activates cell death and disease resistance responses in Arabidopsis.</title>
        <authorList>
            <person name="Pavet V."/>
            <person name="Olmos E."/>
            <person name="Kiddle G."/>
            <person name="Mowla S."/>
            <person name="Kumar S."/>
            <person name="Antoniw J."/>
            <person name="Alvarez M.E."/>
            <person name="Foyer C.H."/>
        </authorList>
    </citation>
    <scope>FUNCTION</scope>
    <scope>DISRUPTION PHENOTYPE</scope>
</reference>
<reference key="18">
    <citation type="journal article" date="2006" name="J. Exp. Bot.">
        <title>Modulation of plant morphology, root architecture, and cell structure by low vitamin C in Arabidopsis thaliana.</title>
        <authorList>
            <person name="Olmos E."/>
            <person name="Kiddle G."/>
            <person name="Pellny T."/>
            <person name="Kumar S."/>
            <person name="Foyer C.H."/>
        </authorList>
    </citation>
    <scope>FUNCTION</scope>
    <scope>DISRUPTION PHENOTYPE</scope>
</reference>
<reference key="19">
    <citation type="journal article" date="2008" name="J. Exp. Bot.">
        <title>Antioxidant status, peroxidase activity, and PR protein transcript levels in ascorbate-deficient Arabidopsis thaliana vtc mutants.</title>
        <authorList>
            <person name="Colville L."/>
            <person name="Smirnoff N."/>
        </authorList>
    </citation>
    <scope>FUNCTION</scope>
</reference>
<reference key="20">
    <citation type="journal article" date="2008" name="Proc. Natl. Acad. Sci. U.S.A.">
        <title>GDP-mannose pyrophosphorylase is a genetic determinant of ammonium sensitivity in Arabidopsis thaliana.</title>
        <authorList>
            <person name="Qin C."/>
            <person name="Qian W."/>
            <person name="Wang W."/>
            <person name="Wu Y."/>
            <person name="Yu C."/>
            <person name="Jiang X."/>
            <person name="Wang D."/>
            <person name="Wu P."/>
        </authorList>
    </citation>
    <scope>FUNCTION</scope>
    <scope>DISRUPTION PHENOTYPE</scope>
    <scope>MUTAGENESIS OF GLY-11</scope>
</reference>
<reference key="21">
    <citation type="journal article" date="2010" name="J. Exp. Bot.">
        <title>A mutation in GDP-mannose pyrophosphorylase causes conditional hypersensitivity to ammonium, resulting in Arabidopsis root growth inhibition, altered ammonium metabolism, and hormone homeostasis.</title>
        <authorList>
            <person name="Barth C."/>
            <person name="Gouzd Z.A."/>
            <person name="Steele H.P."/>
            <person name="Imperio R.M."/>
        </authorList>
    </citation>
    <scope>DISRUPTION PHENOTYPE</scope>
    <source>
        <strain>cv. Columbia</strain>
    </source>
</reference>
<reference key="22">
    <citation type="journal article" date="2013" name="Plant Cell">
        <title>Arabidopsis CSN5B interacts with VTC1 and modulates ascorbic acid synthesis.</title>
        <authorList>
            <person name="Wang J."/>
            <person name="Yu Y."/>
            <person name="Zhang Z."/>
            <person name="Quan R."/>
            <person name="Zhang H."/>
            <person name="Ma L."/>
            <person name="Deng X.W."/>
            <person name="Huang R."/>
        </authorList>
    </citation>
    <scope>INTERACTION WITH CSN5A AND CSN5B</scope>
    <scope>DOMAIN</scope>
    <scope>SUBCELLULAR LOCATION</scope>
</reference>
<reference key="23">
    <citation type="journal article" date="2016" name="Plant Mol. Biol.">
        <title>D27E mutation of VTC1 impairs the interaction with CSN5B and enhances ascorbic acid biosynthesis and seedling growth in Arabidopsis.</title>
        <authorList>
            <person name="Li S."/>
            <person name="Wang J."/>
            <person name="Yu Y."/>
            <person name="Wang F."/>
            <person name="Dong J."/>
            <person name="Huang R."/>
        </authorList>
    </citation>
    <scope>MUTAGENESIS OF ASP-27</scope>
</reference>
<reference key="24">
    <citation type="journal article" date="2022" name="Front. Plant Sci.">
        <title>Crystal Structures of Arabidopsis thaliana GDP-D-Mannose Pyrophosphorylase VITAMIN C DEFECTIVE 1.</title>
        <authorList>
            <person name="Zhang C."/>
            <person name="Zhao S."/>
            <person name="Li Y.S."/>
            <person name="He C."/>
            <person name="Wang X."/>
            <person name="Liu L."/>
        </authorList>
    </citation>
    <scope>X-RAY CRYSTALLOGRAPHY (2.80 ANGSTROMS) OF IN COMPLEX WITH GDP-ALPHA-D-MANNOSE AND DIPHOSPHATE</scope>
    <scope>CATALYTIC ACTIVITY</scope>
    <scope>SUBUNIT</scope>
    <scope>MUTAGENESIS OF 223-PRO--MET-361</scope>
</reference>
<sequence>MKALILVGGFGTRLRPLTLSFPKPLVDFANKPMILHQIEALKAVGVDEVVLAINYQPEVMLNFLKDFETKLEIKITCSQETEPLGTAGPLALARDKLLDGSGEPFFVLNSDVISEYPLKEMLEFHKSHGGEASIMVTKVDEPSKYGVVVMEESTGRVEKFVEKPKLYVGNKINAGIYLLNPSVLDKIELRPTSIEKETFPKIAAAQGLYAMVLPGFWMDIGQPRDYITGLRLYLDSLRKKSPAKLTSGPHIVGNVLVDETATIGEGCLIGPDVAIGPGCIVESGVRLSRCTVMRGVRIKKHACISSSIIGWHSTVGQWARIENMTILGEDVHVSDEIYSNGGVVLPHKEIKSNILKPEIVM</sequence>
<proteinExistence type="evidence at protein level"/>
<name>GMPP1_ARATH</name>
<comment type="function">
    <text evidence="1 2 3 4 5 6 7 8 9 10 15 16">Essential protein during embryogenesis (PubMed:15266054). Catalyzes a reaction of the Smirnoff-Wheeler pathway, the major route to ascorbate biosynthesis in plants. Plays an essential role in plant growth and development and cell-wall architecture. Provides GDP-mannose, used for cell wall carbohydrate biosynthesis, protein N-glycosylation, as well as for the biosynthesis of the antioxidant ascorbate.</text>
</comment>
<comment type="catalytic activity">
    <reaction evidence="1 14">
        <text>alpha-D-mannose 1-phosphate + GTP + H(+) = GDP-alpha-D-mannose + diphosphate</text>
        <dbReference type="Rhea" id="RHEA:15229"/>
        <dbReference type="ChEBI" id="CHEBI:15378"/>
        <dbReference type="ChEBI" id="CHEBI:33019"/>
        <dbReference type="ChEBI" id="CHEBI:37565"/>
        <dbReference type="ChEBI" id="CHEBI:57527"/>
        <dbReference type="ChEBI" id="CHEBI:58409"/>
        <dbReference type="EC" id="2.7.7.13"/>
    </reaction>
</comment>
<comment type="pathway">
    <text evidence="1">Nucleotide-sugar biosynthesis; GDP-alpha-D-mannose biosynthesis; GDP-alpha-D-mannose from alpha-D-mannose 1-phosphate (GTP route): step 1/1.</text>
</comment>
<comment type="subunit">
    <text evidence="12 14">Interacts in vitro with CSN5A and CSN5B, but in planta only with CSN5B, which targets CYT1 for degradation in the dark by the 26S proteasome (PubMed:23424245). Forms homodimers in the unliganded structure (PubMed:35677252). The product-bound structure is composed of six dimers that form a dodecameric assembly (PubMed:35677252).</text>
</comment>
<comment type="interaction">
    <interactant intactId="EBI-4427276">
        <id>O22287</id>
    </interactant>
    <interactant intactId="EBI-4427281">
        <id>Q9C9P3</id>
        <label>KJC1</label>
    </interactant>
    <organismsDiffer>false</organismsDiffer>
    <experiments>4</experiments>
</comment>
<comment type="subcellular location">
    <subcellularLocation>
        <location evidence="12">Cytoplasm</location>
    </subcellularLocation>
    <subcellularLocation>
        <location evidence="12">Nucleus</location>
    </subcellularLocation>
</comment>
<comment type="domain">
    <text evidence="12">The N-terminus (1-40) is necessary for interaction with CNS5B.</text>
</comment>
<comment type="disruption phenotype">
    <text evidence="1 2 4 5 6 7 8 10 11 15 16 17">Embryo defective arrested at the cotyledon stage (PubMed:15266054). Deficient in N-glycosylation, altered in cytokinesis and cell wall architecture during embryogenesis. Mutants vtc1 and hsn1 with reduced enzyme activity show reduced root length and leaf cell size, reduced accumulation of ascorbate, increased sensitivity to ozone, UV-B and oxidative stresses, increased levels of abscisic acid (ABA), salicylic acid (SA) and resistance to virulent pathogens and root growth inhibition in the presence of NH(4)(+).</text>
</comment>
<comment type="similarity">
    <text evidence="34">Belongs to the transferase hexapeptide repeat family.</text>
</comment>
<comment type="online information" name="Seed defective Arabidopsis mutants">
    <link uri="http://seedgenes.org/MutantList"/>
</comment>
<evidence type="ECO:0000269" key="1">
    <source>
    </source>
</evidence>
<evidence type="ECO:0000269" key="2">
    <source>
    </source>
</evidence>
<evidence type="ECO:0000269" key="3">
    <source>
    </source>
</evidence>
<evidence type="ECO:0000269" key="4">
    <source>
    </source>
</evidence>
<evidence type="ECO:0000269" key="5">
    <source>
    </source>
</evidence>
<evidence type="ECO:0000269" key="6">
    <source>
    </source>
</evidence>
<evidence type="ECO:0000269" key="7">
    <source>
    </source>
</evidence>
<evidence type="ECO:0000269" key="8">
    <source>
    </source>
</evidence>
<evidence type="ECO:0000269" key="9">
    <source>
    </source>
</evidence>
<evidence type="ECO:0000269" key="10">
    <source>
    </source>
</evidence>
<evidence type="ECO:0000269" key="11">
    <source>
    </source>
</evidence>
<evidence type="ECO:0000269" key="12">
    <source>
    </source>
</evidence>
<evidence type="ECO:0000269" key="13">
    <source>
    </source>
</evidence>
<evidence type="ECO:0000269" key="14">
    <source>
    </source>
</evidence>
<evidence type="ECO:0000269" key="15">
    <source>
    </source>
</evidence>
<evidence type="ECO:0000269" key="16">
    <source>
    </source>
</evidence>
<evidence type="ECO:0000269" key="17">
    <source>
    </source>
</evidence>
<evidence type="ECO:0000303" key="18">
    <source>
    </source>
</evidence>
<evidence type="ECO:0000303" key="19">
    <source>
    </source>
</evidence>
<evidence type="ECO:0000303" key="20">
    <source>
    </source>
</evidence>
<evidence type="ECO:0000303" key="21">
    <source>
    </source>
</evidence>
<evidence type="ECO:0000303" key="22">
    <source>
    </source>
</evidence>
<evidence type="ECO:0000303" key="23">
    <source>
    </source>
</evidence>
<evidence type="ECO:0000303" key="24">
    <source>
    </source>
</evidence>
<evidence type="ECO:0000303" key="25">
    <source>
    </source>
</evidence>
<evidence type="ECO:0000303" key="26">
    <source>
    </source>
</evidence>
<evidence type="ECO:0000303" key="27">
    <source>
    </source>
</evidence>
<evidence type="ECO:0000303" key="28">
    <source>
    </source>
</evidence>
<evidence type="ECO:0000303" key="29">
    <source>
    </source>
</evidence>
<evidence type="ECO:0000303" key="30">
    <source>
    </source>
</evidence>
<evidence type="ECO:0000303" key="31">
    <source ref="1"/>
</evidence>
<evidence type="ECO:0000303" key="32">
    <source ref="2"/>
</evidence>
<evidence type="ECO:0000303" key="33">
    <source ref="3"/>
</evidence>
<evidence type="ECO:0000305" key="34"/>
<evidence type="ECO:0000305" key="35">
    <source>
    </source>
</evidence>
<evidence type="ECO:0000312" key="36">
    <source>
        <dbReference type="Araport" id="AT2G39770"/>
    </source>
</evidence>
<evidence type="ECO:0000312" key="37">
    <source>
        <dbReference type="EMBL" id="AAB87126.1"/>
    </source>
</evidence>
<evidence type="ECO:0007744" key="38">
    <source>
        <dbReference type="PDB" id="7X8K"/>
    </source>
</evidence>
<evidence type="ECO:0007829" key="39">
    <source>
        <dbReference type="PDB" id="7X8J"/>
    </source>
</evidence>
<evidence type="ECO:0007829" key="40">
    <source>
        <dbReference type="PDB" id="7X8K"/>
    </source>
</evidence>
<organism>
    <name type="scientific">Arabidopsis thaliana</name>
    <name type="common">Mouse-ear cress</name>
    <dbReference type="NCBI Taxonomy" id="3702"/>
    <lineage>
        <taxon>Eukaryota</taxon>
        <taxon>Viridiplantae</taxon>
        <taxon>Streptophyta</taxon>
        <taxon>Embryophyta</taxon>
        <taxon>Tracheophyta</taxon>
        <taxon>Spermatophyta</taxon>
        <taxon>Magnoliopsida</taxon>
        <taxon>eudicotyledons</taxon>
        <taxon>Gunneridae</taxon>
        <taxon>Pentapetalae</taxon>
        <taxon>rosids</taxon>
        <taxon>malvids</taxon>
        <taxon>Brassicales</taxon>
        <taxon>Brassicaceae</taxon>
        <taxon>Camelineae</taxon>
        <taxon>Arabidopsis</taxon>
    </lineage>
</organism>
<keyword id="KW-0002">3D-structure</keyword>
<keyword id="KW-0963">Cytoplasm</keyword>
<keyword id="KW-0342">GTP-binding</keyword>
<keyword id="KW-0547">Nucleotide-binding</keyword>
<keyword id="KW-0548">Nucleotidyltransferase</keyword>
<keyword id="KW-0539">Nucleus</keyword>
<keyword id="KW-1185">Reference proteome</keyword>
<keyword id="KW-0808">Transferase</keyword>
<feature type="chain" id="PRO_0000412464" description="Mannose-1-phosphate guanylyltransferase 1">
    <location>
        <begin position="1"/>
        <end position="361"/>
    </location>
</feature>
<feature type="binding site" evidence="14 38">
    <location>
        <position position="6"/>
    </location>
    <ligand>
        <name>GDP-alpha-D-mannose</name>
        <dbReference type="ChEBI" id="CHEBI:57527"/>
    </ligand>
</feature>
<feature type="binding site" evidence="14 38">
    <location>
        <position position="7"/>
    </location>
    <ligand>
        <name>GDP-alpha-D-mannose</name>
        <dbReference type="ChEBI" id="CHEBI:57527"/>
    </ligand>
</feature>
<feature type="binding site" evidence="14 38">
    <location>
        <position position="9"/>
    </location>
    <ligand>
        <name>diphosphate</name>
        <dbReference type="ChEBI" id="CHEBI:33019"/>
    </ligand>
</feature>
<feature type="binding site" evidence="14 38">
    <location>
        <position position="11"/>
    </location>
    <ligand>
        <name>diphosphate</name>
        <dbReference type="ChEBI" id="CHEBI:33019"/>
    </ligand>
</feature>
<feature type="binding site" evidence="14 38">
    <location>
        <position position="12"/>
    </location>
    <ligand>
        <name>diphosphate</name>
        <dbReference type="ChEBI" id="CHEBI:33019"/>
    </ligand>
</feature>
<feature type="binding site" evidence="14 38">
    <location>
        <position position="13"/>
    </location>
    <ligand>
        <name>diphosphate</name>
        <dbReference type="ChEBI" id="CHEBI:33019"/>
    </ligand>
</feature>
<feature type="binding site" evidence="14 38">
    <location>
        <position position="23"/>
    </location>
    <ligand>
        <name>diphosphate</name>
        <dbReference type="ChEBI" id="CHEBI:33019"/>
    </ligand>
</feature>
<feature type="binding site" evidence="14 38">
    <location>
        <position position="85"/>
    </location>
    <ligand>
        <name>GDP-alpha-D-mannose</name>
        <dbReference type="ChEBI" id="CHEBI:57527"/>
    </ligand>
</feature>
<feature type="binding site" evidence="14 38">
    <location>
        <position position="109"/>
    </location>
    <ligand>
        <name>GDP-alpha-D-mannose</name>
        <dbReference type="ChEBI" id="CHEBI:57527"/>
    </ligand>
</feature>
<feature type="binding site" evidence="14 38">
    <location>
        <position position="111"/>
    </location>
    <ligand>
        <name>GDP-alpha-D-mannose</name>
        <dbReference type="ChEBI" id="CHEBI:57527"/>
    </ligand>
</feature>
<feature type="binding site" evidence="14 38">
    <location>
        <position position="146"/>
    </location>
    <ligand>
        <name>GDP-alpha-D-mannose</name>
        <dbReference type="ChEBI" id="CHEBI:57527"/>
    </ligand>
</feature>
<feature type="binding site" evidence="14 38">
    <location>
        <position position="173"/>
    </location>
    <ligand>
        <name>GDP-alpha-D-mannose</name>
        <dbReference type="ChEBI" id="CHEBI:57527"/>
    </ligand>
</feature>
<feature type="mutagenesis site" description="In hsn1; reduced enzyme activity, ascorbate concentrations and N-glycosylation, and increased sensitivity to ammonium." evidence="10">
    <original>G</original>
    <variation>S</variation>
    <location>
        <position position="11"/>
    </location>
</feature>
<feature type="mutagenesis site" description="In vtc1-1 and vtc1-2; reduced enzyme activity and ascorbate concentrations, and ozone-sensitive." evidence="1">
    <original>P</original>
    <variation>S</variation>
    <location>
        <position position="22"/>
    </location>
</feature>
<feature type="mutagenesis site" description="Abolishes interaction with CSN5B and subsequent degradation in the dark by the 26S proteasome, and increases ascorbate accumulation in seedlings." evidence="13">
    <original>D</original>
    <variation>E</variation>
    <location>
        <position position="27"/>
    </location>
</feature>
<feature type="mutagenesis site" description="In cyt1-1; deficient in N-glycosylation and cellulose, and embryo lethal." evidence="3">
    <original>P</original>
    <variation>L</variation>
    <location>
        <position position="89"/>
    </location>
</feature>
<feature type="mutagenesis site" description="Reduces catalytic activity 3-fold." evidence="14">
    <location>
        <begin position="223"/>
        <end position="361"/>
    </location>
</feature>
<feature type="sequence conflict" description="In Ref. 3; CAC35355." evidence="34" ref="3">
    <original>M</original>
    <variation>I</variation>
    <location>
        <position position="121"/>
    </location>
</feature>
<feature type="sequence conflict" description="In Ref. 3; CAC35355." evidence="34" ref="3">
    <original>L</original>
    <variation>H</variation>
    <location>
        <position position="208"/>
    </location>
</feature>
<feature type="strand" evidence="39">
    <location>
        <begin position="2"/>
        <end position="10"/>
    </location>
</feature>
<feature type="helix" evidence="39">
    <location>
        <begin position="12"/>
        <end position="14"/>
    </location>
</feature>
<feature type="helix" evidence="39">
    <location>
        <begin position="17"/>
        <end position="19"/>
    </location>
</feature>
<feature type="helix" evidence="39">
    <location>
        <begin position="23"/>
        <end position="25"/>
    </location>
</feature>
<feature type="strand" evidence="39">
    <location>
        <begin position="26"/>
        <end position="28"/>
    </location>
</feature>
<feature type="helix" evidence="39">
    <location>
        <begin position="33"/>
        <end position="42"/>
    </location>
</feature>
<feature type="turn" evidence="39">
    <location>
        <begin position="43"/>
        <end position="45"/>
    </location>
</feature>
<feature type="strand" evidence="39">
    <location>
        <begin position="48"/>
        <end position="55"/>
    </location>
</feature>
<feature type="helix" evidence="39">
    <location>
        <begin position="57"/>
        <end position="60"/>
    </location>
</feature>
<feature type="helix" evidence="39">
    <location>
        <begin position="61"/>
        <end position="71"/>
    </location>
</feature>
<feature type="strand" evidence="39">
    <location>
        <begin position="74"/>
        <end position="79"/>
    </location>
</feature>
<feature type="turn" evidence="39">
    <location>
        <begin position="85"/>
        <end position="87"/>
    </location>
</feature>
<feature type="helix" evidence="39">
    <location>
        <begin position="88"/>
        <end position="92"/>
    </location>
</feature>
<feature type="helix" evidence="39">
    <location>
        <begin position="94"/>
        <end position="97"/>
    </location>
</feature>
<feature type="strand" evidence="39">
    <location>
        <begin position="105"/>
        <end position="109"/>
    </location>
</feature>
<feature type="strand" evidence="39">
    <location>
        <begin position="112"/>
        <end position="114"/>
    </location>
</feature>
<feature type="helix" evidence="39">
    <location>
        <begin position="118"/>
        <end position="128"/>
    </location>
</feature>
<feature type="strand" evidence="39">
    <location>
        <begin position="131"/>
        <end position="138"/>
    </location>
</feature>
<feature type="helix" evidence="39">
    <location>
        <begin position="142"/>
        <end position="144"/>
    </location>
</feature>
<feature type="strand" evidence="39">
    <location>
        <begin position="145"/>
        <end position="150"/>
    </location>
</feature>
<feature type="turn" evidence="39">
    <location>
        <begin position="152"/>
        <end position="154"/>
    </location>
</feature>
<feature type="strand" evidence="39">
    <location>
        <begin position="156"/>
        <end position="163"/>
    </location>
</feature>
<feature type="strand" evidence="39">
    <location>
        <begin position="170"/>
        <end position="179"/>
    </location>
</feature>
<feature type="helix" evidence="39">
    <location>
        <begin position="181"/>
        <end position="186"/>
    </location>
</feature>
<feature type="turn" evidence="39">
    <location>
        <begin position="194"/>
        <end position="197"/>
    </location>
</feature>
<feature type="helix" evidence="39">
    <location>
        <begin position="198"/>
        <end position="204"/>
    </location>
</feature>
<feature type="strand" evidence="39">
    <location>
        <begin position="208"/>
        <end position="212"/>
    </location>
</feature>
<feature type="strand" evidence="39">
    <location>
        <begin position="217"/>
        <end position="219"/>
    </location>
</feature>
<feature type="helix" evidence="39">
    <location>
        <begin position="223"/>
        <end position="240"/>
    </location>
</feature>
<feature type="helix" evidence="39">
    <location>
        <begin position="242"/>
        <end position="244"/>
    </location>
</feature>
<feature type="strand" evidence="39">
    <location>
        <begin position="255"/>
        <end position="257"/>
    </location>
</feature>
<feature type="strand" evidence="39">
    <location>
        <begin position="271"/>
        <end position="275"/>
    </location>
</feature>
<feature type="strand" evidence="39">
    <location>
        <begin position="286"/>
        <end position="289"/>
    </location>
</feature>
<feature type="strand" evidence="39">
    <location>
        <begin position="303"/>
        <end position="309"/>
    </location>
</feature>
<feature type="strand" evidence="39">
    <location>
        <begin position="320"/>
        <end position="327"/>
    </location>
</feature>
<feature type="strand" evidence="39">
    <location>
        <begin position="338"/>
        <end position="341"/>
    </location>
</feature>
<feature type="helix" evidence="40">
    <location>
        <begin position="358"/>
        <end position="361"/>
    </location>
</feature>
<gene>
    <name evidence="20 30 32" type="primary">CYT1</name>
    <name evidence="23" type="synonym">EMB101</name>
    <name evidence="31 33" type="synonym">GMP1</name>
    <name evidence="27" type="synonym">HSN1</name>
    <name evidence="28" type="synonym">SOZ1</name>
    <name evidence="18 19 21 22 24 25 26 29" type="synonym">VTC1</name>
    <name evidence="36" type="ordered locus">At2g39770</name>
    <name evidence="37" type="ORF">T5I7.7</name>
</gene>